<evidence type="ECO:0000255" key="1"/>
<evidence type="ECO:0000269" key="2">
    <source>
    </source>
</evidence>
<evidence type="ECO:0000269" key="3">
    <source>
    </source>
</evidence>
<evidence type="ECO:0000269" key="4">
    <source>
    </source>
</evidence>
<evidence type="ECO:0000269" key="5">
    <source ref="3"/>
</evidence>
<evidence type="ECO:0000303" key="6">
    <source>
    </source>
</evidence>
<evidence type="ECO:0000303" key="7">
    <source>
    </source>
</evidence>
<evidence type="ECO:0000305" key="8"/>
<evidence type="ECO:0000312" key="9">
    <source>
        <dbReference type="EMBL" id="EHK24054.1"/>
    </source>
</evidence>
<evidence type="ECO:0000312" key="10">
    <source>
        <dbReference type="Proteomes" id="UP000007115"/>
    </source>
</evidence>
<evidence type="ECO:0007744" key="11">
    <source>
        <dbReference type="PDB" id="7CWJ"/>
    </source>
</evidence>
<evidence type="ECO:0007744" key="12">
    <source>
        <dbReference type="PDB" id="7CWP"/>
    </source>
</evidence>
<evidence type="ECO:0007744" key="13">
    <source>
        <dbReference type="PDB" id="7ESW"/>
    </source>
</evidence>
<evidence type="ECO:0007829" key="14">
    <source>
        <dbReference type="PDB" id="7ESW"/>
    </source>
</evidence>
<keyword id="KW-0002">3D-structure</keyword>
<keyword id="KW-1015">Disulfide bond</keyword>
<keyword id="KW-1185">Reference proteome</keyword>
<keyword id="KW-0964">Secreted</keyword>
<keyword id="KW-0732">Signal</keyword>
<name>SSCP_HYPVG</name>
<comment type="function">
    <text evidence="4">Stimulates salicylic acid signaling in host plant roots.</text>
</comment>
<comment type="subunit">
    <text evidence="3 4">Homodimer.</text>
</comment>
<comment type="subcellular location">
    <subcellularLocation>
        <location evidence="2 5">Secreted</location>
    </subcellularLocation>
</comment>
<comment type="induction">
    <text evidence="2 5">Induced during growth on maize and banana roots.</text>
</comment>
<gene>
    <name evidence="7" type="primary">TSP1</name>
    <name evidence="9" type="ORF">TRIVIDRAFT_215947</name>
</gene>
<organism evidence="10">
    <name type="scientific">Hypocrea virens (strain Gv29-8 / FGSC 10586)</name>
    <name type="common">Gliocladium virens</name>
    <name type="synonym">Trichoderma virens</name>
    <dbReference type="NCBI Taxonomy" id="413071"/>
    <lineage>
        <taxon>Eukaryota</taxon>
        <taxon>Fungi</taxon>
        <taxon>Dikarya</taxon>
        <taxon>Ascomycota</taxon>
        <taxon>Pezizomycotina</taxon>
        <taxon>Sordariomycetes</taxon>
        <taxon>Hypocreomycetidae</taxon>
        <taxon>Hypocreales</taxon>
        <taxon>Hypocreaceae</taxon>
        <taxon>Trichoderma</taxon>
    </lineage>
</organism>
<sequence length="147" mass="15393">MQITKTLVATLFAASTAFAAPTPADKSMMAAVPEWTITNLKRVCNAGNTSCTWTFGVDTHLATATSCTYVVKANANASQASGGPVTCGPYTITSSWSGQFGPNNGFTTFAVTDFSKKLIVWPAYTDVQVQAGKVVSPNQSYAPANLP</sequence>
<accession>G9MQD3</accession>
<dbReference type="EMBL" id="ABDF02000005">
    <property type="protein sequence ID" value="EHK24054.1"/>
    <property type="molecule type" value="Genomic_DNA"/>
</dbReference>
<dbReference type="RefSeq" id="XP_013958253.1">
    <property type="nucleotide sequence ID" value="XM_014102778.1"/>
</dbReference>
<dbReference type="PDB" id="7CWJ">
    <property type="method" value="X-ray"/>
    <property type="resolution" value="1.61 A"/>
    <property type="chains" value="A=19-147"/>
</dbReference>
<dbReference type="PDB" id="7CWP">
    <property type="method" value="X-ray"/>
    <property type="resolution" value="2.10 A"/>
    <property type="chains" value="A=19-147"/>
</dbReference>
<dbReference type="PDB" id="7ESW">
    <property type="method" value="X-ray"/>
    <property type="resolution" value="1.25 A"/>
    <property type="chains" value="A=19-147"/>
</dbReference>
<dbReference type="PDBsum" id="7CWJ"/>
<dbReference type="PDBsum" id="7CWP"/>
<dbReference type="PDBsum" id="7ESW"/>
<dbReference type="SMR" id="G9MQD3"/>
<dbReference type="EnsemblFungi" id="EHK24054">
    <property type="protein sequence ID" value="EHK24054"/>
    <property type="gene ID" value="TRIVIDRAFT_215947"/>
</dbReference>
<dbReference type="GeneID" id="25791027"/>
<dbReference type="VEuPathDB" id="FungiDB:TRIVIDRAFT_215947"/>
<dbReference type="eggNOG" id="ENOG502SPD0">
    <property type="taxonomic scope" value="Eukaryota"/>
</dbReference>
<dbReference type="HOGENOM" id="CLU_117282_0_0_1"/>
<dbReference type="InParanoid" id="G9MQD3"/>
<dbReference type="OMA" id="WPAYTDV"/>
<dbReference type="OrthoDB" id="5352317at2759"/>
<dbReference type="Proteomes" id="UP000007115">
    <property type="component" value="Unassembled WGS sequence"/>
</dbReference>
<dbReference type="GO" id="GO:0005576">
    <property type="term" value="C:extracellular region"/>
    <property type="evidence" value="ECO:0000314"/>
    <property type="project" value="UniProtKB"/>
</dbReference>
<dbReference type="GO" id="GO:0140404">
    <property type="term" value="P:effector-mediated perturbation of host innate immune response by symbiont"/>
    <property type="evidence" value="ECO:0000314"/>
    <property type="project" value="UniProtKB"/>
</dbReference>
<protein>
    <recommendedName>
        <fullName evidence="7">Effector TSP1</fullName>
    </recommendedName>
    <alternativeName>
        <fullName evidence="6">Small secreted cysteine-rich protein</fullName>
        <shortName evidence="6">SSCP</shortName>
    </alternativeName>
</protein>
<feature type="signal peptide" evidence="1">
    <location>
        <begin position="1"/>
        <end position="19"/>
    </location>
</feature>
<feature type="chain" id="PRO_5003524114" description="Effector TSP1" evidence="1">
    <location>
        <begin position="20"/>
        <end position="147"/>
    </location>
</feature>
<feature type="disulfide bond" evidence="4 11 12 13">
    <location>
        <begin position="44"/>
        <end position="51"/>
    </location>
</feature>
<feature type="disulfide bond" evidence="4 11 13">
    <location>
        <begin position="67"/>
        <end position="87"/>
    </location>
</feature>
<feature type="strand" evidence="14">
    <location>
        <begin position="35"/>
        <end position="44"/>
    </location>
</feature>
<feature type="strand" evidence="14">
    <location>
        <begin position="48"/>
        <end position="58"/>
    </location>
</feature>
<feature type="strand" evidence="14">
    <location>
        <begin position="60"/>
        <end position="62"/>
    </location>
</feature>
<feature type="strand" evidence="14">
    <location>
        <begin position="65"/>
        <end position="72"/>
    </location>
</feature>
<feature type="helix" evidence="14">
    <location>
        <begin position="77"/>
        <end position="79"/>
    </location>
</feature>
<feature type="strand" evidence="14">
    <location>
        <begin position="82"/>
        <end position="87"/>
    </location>
</feature>
<feature type="strand" evidence="14">
    <location>
        <begin position="90"/>
        <end position="97"/>
    </location>
</feature>
<feature type="helix" evidence="14">
    <location>
        <begin position="102"/>
        <end position="104"/>
    </location>
</feature>
<feature type="strand" evidence="14">
    <location>
        <begin position="106"/>
        <end position="113"/>
    </location>
</feature>
<feature type="turn" evidence="14">
    <location>
        <begin position="114"/>
        <end position="117"/>
    </location>
</feature>
<feature type="strand" evidence="14">
    <location>
        <begin position="118"/>
        <end position="120"/>
    </location>
</feature>
<feature type="strand" evidence="14">
    <location>
        <begin position="123"/>
        <end position="125"/>
    </location>
</feature>
<feature type="helix" evidence="14">
    <location>
        <begin position="126"/>
        <end position="129"/>
    </location>
</feature>
<feature type="helix" evidence="14">
    <location>
        <begin position="130"/>
        <end position="132"/>
    </location>
</feature>
<feature type="strand" evidence="14">
    <location>
        <begin position="139"/>
        <end position="141"/>
    </location>
</feature>
<reference evidence="10" key="1">
    <citation type="journal article" date="2011" name="Genome Biol.">
        <title>Comparative genome sequence analysis underscores mycoparasitism as the ancestral life style of Trichoderma.</title>
        <authorList>
            <person name="Kubicek C.P."/>
            <person name="Herrera-Estrella A."/>
            <person name="Seidl-Seiboth V."/>
            <person name="Martinez D.A."/>
            <person name="Druzhinina I.S."/>
            <person name="Thon M."/>
            <person name="Zeilinger S."/>
            <person name="Casas-Flores S."/>
            <person name="Horwitz B.A."/>
            <person name="Mukherjee P.K."/>
            <person name="Mukherjee M."/>
            <person name="Kredics L."/>
            <person name="Alcaraz L.D."/>
            <person name="Aerts A."/>
            <person name="Antal Z."/>
            <person name="Atanasova L."/>
            <person name="Cervantes-Badillo M.G."/>
            <person name="Challacombe J."/>
            <person name="Chertkov O."/>
            <person name="McCluskey K."/>
            <person name="Coulpier F."/>
            <person name="Deshpande N."/>
            <person name="von Doehren H."/>
            <person name="Ebbole D.J."/>
            <person name="Esquivel-Naranjo E.U."/>
            <person name="Fekete E."/>
            <person name="Flipphi M."/>
            <person name="Glaser F."/>
            <person name="Gomez-Rodriguez E.Y."/>
            <person name="Gruber S."/>
            <person name="Han C."/>
            <person name="Henrissat B."/>
            <person name="Hermosa R."/>
            <person name="Hernandez-Onate M."/>
            <person name="Karaffa L."/>
            <person name="Kosti I."/>
            <person name="Le Crom S."/>
            <person name="Lindquist E."/>
            <person name="Lucas S."/>
            <person name="Luebeck M."/>
            <person name="Luebeck P.S."/>
            <person name="Margeot A."/>
            <person name="Metz B."/>
            <person name="Misra M."/>
            <person name="Nevalainen H."/>
            <person name="Omann M."/>
            <person name="Packer N."/>
            <person name="Perrone G."/>
            <person name="Uresti-Rivera E.E."/>
            <person name="Salamov A."/>
            <person name="Schmoll M."/>
            <person name="Seiboth B."/>
            <person name="Shapiro H."/>
            <person name="Sukno S."/>
            <person name="Tamayo-Ramos J.A."/>
            <person name="Tisch D."/>
            <person name="Wiest A."/>
            <person name="Wilkinson H.H."/>
            <person name="Zhang M."/>
            <person name="Coutinho P.M."/>
            <person name="Kenerley C.M."/>
            <person name="Monte E."/>
            <person name="Baker S.E."/>
            <person name="Grigoriev I.V."/>
        </authorList>
    </citation>
    <scope>NUCLEOTIDE SEQUENCE [LARGE SCALE GENOMIC DNA]</scope>
    <source>
        <strain evidence="10">Gv29-8 / FGSC 10586</strain>
    </source>
</reference>
<reference evidence="8" key="2">
    <citation type="journal article" date="2015" name="Mol. Cell. Proteomics">
        <title>Secretome of Trichoderma interacting with maize roots: role in induced systemic resistance.</title>
        <authorList>
            <person name="Lamdan N.L."/>
            <person name="Shalaby S."/>
            <person name="Ziv T."/>
            <person name="Kenerley C.M."/>
            <person name="Horwitz B.A."/>
        </authorList>
    </citation>
    <scope>SUBCELLULAR LOCATION</scope>
    <scope>INDUCTION</scope>
</reference>
<reference evidence="8" key="3">
    <citation type="journal article" date="2020" name="Physiol. Mol. Plant Pathol.">
        <title>Secretome of Trichoderma virens induced by banana roots - identification of novel fungal proteins for enhancing plant defence.</title>
        <authorList>
            <person name="Muthukathan G."/>
            <person name="Mukherjee P."/>
            <person name="Salaskar D."/>
            <person name="Pachauri S."/>
            <person name="Tak H."/>
            <person name="Ganapathi T.R."/>
            <person name="Mukherjee P.K."/>
        </authorList>
    </citation>
    <scope>SUBCELLULAR LOCATION</scope>
    <scope>INDUCTION</scope>
</reference>
<reference evidence="8" key="4">
    <citation type="journal article" date="2020" name="Acta Crystallogr. F Struct. Biol. Commun.">
        <title>Expression, purification, crystallization and X-ray diffraction studies of a novel root-induced secreted protein from Trichoderma virens.</title>
        <authorList>
            <person name="Bansal R."/>
            <person name="Mistry H.U."/>
            <person name="Mukherjee P.K."/>
            <person name="Gupta G.D."/>
        </authorList>
    </citation>
    <scope>SUBUNIT</scope>
</reference>
<reference evidence="11 12 13" key="5">
    <citation type="journal article" date="2021" name="Int. J. Biol. Macromol.">
        <title>Structure-function analysis reveals Trichoderma virens Tsp1 to be a novel fungal effector protein modulating plant defence.</title>
        <authorList>
            <person name="Gupta G.D."/>
            <person name="Bansal R."/>
            <person name="Mistry H."/>
            <person name="Pandey B."/>
            <person name="Mukherjee P.K."/>
        </authorList>
    </citation>
    <scope>X-RAY CRYSTALLOGRAPHY (1.25 ANGSTROMS) OF 19-147</scope>
    <scope>FUNCTION</scope>
    <scope>SUBUNIT</scope>
    <scope>DISULFIDE BOND</scope>
</reference>
<proteinExistence type="evidence at protein level"/>